<evidence type="ECO:0000255" key="1">
    <source>
        <dbReference type="HAMAP-Rule" id="MF_03147"/>
    </source>
</evidence>
<sequence>MAQVAANGARQPLLQLLRGPSGKLWEVCIGLEVHAQVLSRSKLMSGSAASTLSSARPNRNVSFFDAALPGTLPVINRECVHQAIRMGLAVDATVHPRSLFERKHYFYCDLPLGYQLTQQRAPVASGGALHFELPESAVVSEHGGAHSDEATFDASKYKSRKEKNEALKKWKAKQAKKQQDVISRSVRITRIQIEQDSGKSNHDLEDDSTVVDLNRAGTALLEIVMEPDLRSPVEAGQVMRQLQHLLRHLDVCDGNMEEGSMRCDLNVSVRPTNLGAEADVESLHNALTARTAAPFGERVEVKNMNSIRNMMRAAEYEARRQIALIEEEGGEVHRETRSFDAVTGETKRMRSKEGAKDYRFFPEPDLPPLVFSEKLIQEISERMPELPEALKERLCAQYDLTSYESLVLVNEPGAAPYFETVAAQNSRPSKVVVNWVLNDLFGHLKAVNGDIASSPVTATELGALIDLIQDGTISGKIAKDVLELMFYENEPKKTPLQIVEEKGWKQIQDPEEIRALCRAVLDDPKAKKNLDAYWKGKTQLFGFFIGQVMKQCGGRVHPELANSIMQEILEEHKQ</sequence>
<comment type="function">
    <text evidence="1">Allows the formation of correctly charged Gln-tRNA(Gln) through the transamidation of misacylated Glu-tRNA(Gln) in the mitochondria. The reaction takes place in the presence of glutamine and ATP through an activated gamma-phospho-Glu-tRNA(Gln).</text>
</comment>
<comment type="catalytic activity">
    <reaction evidence="1">
        <text>L-glutamyl-tRNA(Gln) + L-glutamine + ATP + H2O = L-glutaminyl-tRNA(Gln) + L-glutamate + ADP + phosphate + H(+)</text>
        <dbReference type="Rhea" id="RHEA:17521"/>
        <dbReference type="Rhea" id="RHEA-COMP:9681"/>
        <dbReference type="Rhea" id="RHEA-COMP:9684"/>
        <dbReference type="ChEBI" id="CHEBI:15377"/>
        <dbReference type="ChEBI" id="CHEBI:15378"/>
        <dbReference type="ChEBI" id="CHEBI:29985"/>
        <dbReference type="ChEBI" id="CHEBI:30616"/>
        <dbReference type="ChEBI" id="CHEBI:43474"/>
        <dbReference type="ChEBI" id="CHEBI:58359"/>
        <dbReference type="ChEBI" id="CHEBI:78520"/>
        <dbReference type="ChEBI" id="CHEBI:78521"/>
        <dbReference type="ChEBI" id="CHEBI:456216"/>
    </reaction>
</comment>
<comment type="subunit">
    <text evidence="1">Subunit of the heterotrimeric GatCAB amidotransferase (AdT) complex, composed of A, B and C subunits.</text>
</comment>
<comment type="subcellular location">
    <subcellularLocation>
        <location evidence="1">Mitochondrion</location>
    </subcellularLocation>
</comment>
<comment type="miscellaneous">
    <text evidence="1">This protein may be expected to contain an N-terminal transit peptide but none has been predicted.</text>
</comment>
<comment type="similarity">
    <text evidence="1">Belongs to the GatB/GatE family. GatB subfamily.</text>
</comment>
<protein>
    <recommendedName>
        <fullName evidence="1">Glutamyl-tRNA(Gln) amidotransferase subunit B, mitochondrial</fullName>
        <shortName evidence="1">Glu-AdT subunit B</shortName>
        <ecNumber evidence="1">6.3.5.-</ecNumber>
    </recommendedName>
</protein>
<name>GATB_PHYIT</name>
<accession>D0N761</accession>
<gene>
    <name type="ORF">PITG_07062</name>
</gene>
<feature type="chain" id="PRO_0000413237" description="Glutamyl-tRNA(Gln) amidotransferase subunit B, mitochondrial">
    <location>
        <begin position="1"/>
        <end position="574"/>
    </location>
</feature>
<dbReference type="EC" id="6.3.5.-" evidence="1"/>
<dbReference type="EMBL" id="DS028127">
    <property type="protein sequence ID" value="EEY53410.1"/>
    <property type="molecule type" value="Genomic_DNA"/>
</dbReference>
<dbReference type="RefSeq" id="XP_002905028.1">
    <property type="nucleotide sequence ID" value="XM_002904982.1"/>
</dbReference>
<dbReference type="SMR" id="D0N761"/>
<dbReference type="STRING" id="403677.D0N761"/>
<dbReference type="EnsemblProtists" id="PITG_07062T0">
    <property type="protein sequence ID" value="PITG_07062T0"/>
    <property type="gene ID" value="PITG_07062"/>
</dbReference>
<dbReference type="GeneID" id="9464025"/>
<dbReference type="KEGG" id="pif:PITG_07062"/>
<dbReference type="VEuPathDB" id="FungiDB:PITG_07062"/>
<dbReference type="eggNOG" id="KOG2438">
    <property type="taxonomic scope" value="Eukaryota"/>
</dbReference>
<dbReference type="HOGENOM" id="CLU_019240_1_1_1"/>
<dbReference type="InParanoid" id="D0N761"/>
<dbReference type="OMA" id="ARKWWMG"/>
<dbReference type="OrthoDB" id="1722066at2759"/>
<dbReference type="Proteomes" id="UP000006643">
    <property type="component" value="Partially assembled WGS sequence"/>
</dbReference>
<dbReference type="GO" id="GO:0030956">
    <property type="term" value="C:glutamyl-tRNA(Gln) amidotransferase complex"/>
    <property type="evidence" value="ECO:0007669"/>
    <property type="project" value="UniProtKB-UniRule"/>
</dbReference>
<dbReference type="GO" id="GO:0005739">
    <property type="term" value="C:mitochondrion"/>
    <property type="evidence" value="ECO:0007669"/>
    <property type="project" value="UniProtKB-SubCell"/>
</dbReference>
<dbReference type="GO" id="GO:0005524">
    <property type="term" value="F:ATP binding"/>
    <property type="evidence" value="ECO:0007669"/>
    <property type="project" value="UniProtKB-KW"/>
</dbReference>
<dbReference type="GO" id="GO:0050567">
    <property type="term" value="F:glutaminyl-tRNA synthase (glutamine-hydrolyzing) activity"/>
    <property type="evidence" value="ECO:0007669"/>
    <property type="project" value="UniProtKB-UniRule"/>
</dbReference>
<dbReference type="GO" id="GO:0070681">
    <property type="term" value="P:glutaminyl-tRNAGln biosynthesis via transamidation"/>
    <property type="evidence" value="ECO:0007669"/>
    <property type="project" value="UniProtKB-UniRule"/>
</dbReference>
<dbReference type="GO" id="GO:0032543">
    <property type="term" value="P:mitochondrial translation"/>
    <property type="evidence" value="ECO:0007669"/>
    <property type="project" value="UniProtKB-UniRule"/>
</dbReference>
<dbReference type="Gene3D" id="1.10.10.410">
    <property type="match status" value="1"/>
</dbReference>
<dbReference type="HAMAP" id="MF_00121">
    <property type="entry name" value="GatB"/>
    <property type="match status" value="1"/>
</dbReference>
<dbReference type="InterPro" id="IPR017959">
    <property type="entry name" value="Asn/Gln-tRNA_amidoTrfase_suB/E"/>
</dbReference>
<dbReference type="InterPro" id="IPR006075">
    <property type="entry name" value="Asn/Gln-tRNA_Trfase_suB/E_cat"/>
</dbReference>
<dbReference type="InterPro" id="IPR018027">
    <property type="entry name" value="Asn/Gln_amidotransferase"/>
</dbReference>
<dbReference type="InterPro" id="IPR003789">
    <property type="entry name" value="Asn/Gln_tRNA_amidoTrase-B-like"/>
</dbReference>
<dbReference type="InterPro" id="IPR004413">
    <property type="entry name" value="GatB"/>
</dbReference>
<dbReference type="InterPro" id="IPR023168">
    <property type="entry name" value="GatB_Yqey_C_2"/>
</dbReference>
<dbReference type="InterPro" id="IPR014746">
    <property type="entry name" value="Gln_synth/guanido_kin_cat_dom"/>
</dbReference>
<dbReference type="NCBIfam" id="TIGR00133">
    <property type="entry name" value="gatB"/>
    <property type="match status" value="1"/>
</dbReference>
<dbReference type="NCBIfam" id="NF004012">
    <property type="entry name" value="PRK05477.1-2"/>
    <property type="match status" value="1"/>
</dbReference>
<dbReference type="PANTHER" id="PTHR11659">
    <property type="entry name" value="GLUTAMYL-TRNA GLN AMIDOTRANSFERASE SUBUNIT B MITOCHONDRIAL AND PROKARYOTIC PET112-RELATED"/>
    <property type="match status" value="1"/>
</dbReference>
<dbReference type="PANTHER" id="PTHR11659:SF0">
    <property type="entry name" value="GLUTAMYL-TRNA(GLN) AMIDOTRANSFERASE SUBUNIT B, MITOCHONDRIAL"/>
    <property type="match status" value="1"/>
</dbReference>
<dbReference type="Pfam" id="PF02934">
    <property type="entry name" value="GatB_N"/>
    <property type="match status" value="1"/>
</dbReference>
<dbReference type="Pfam" id="PF02637">
    <property type="entry name" value="GatB_Yqey"/>
    <property type="match status" value="1"/>
</dbReference>
<dbReference type="SMART" id="SM00845">
    <property type="entry name" value="GatB_Yqey"/>
    <property type="match status" value="1"/>
</dbReference>
<dbReference type="SUPFAM" id="SSF89095">
    <property type="entry name" value="GatB/YqeY motif"/>
    <property type="match status" value="1"/>
</dbReference>
<dbReference type="SUPFAM" id="SSF55931">
    <property type="entry name" value="Glutamine synthetase/guanido kinase"/>
    <property type="match status" value="1"/>
</dbReference>
<keyword id="KW-0067">ATP-binding</keyword>
<keyword id="KW-0436">Ligase</keyword>
<keyword id="KW-0496">Mitochondrion</keyword>
<keyword id="KW-0547">Nucleotide-binding</keyword>
<keyword id="KW-0648">Protein biosynthesis</keyword>
<keyword id="KW-1185">Reference proteome</keyword>
<proteinExistence type="inferred from homology"/>
<organism>
    <name type="scientific">Phytophthora infestans (strain T30-4)</name>
    <name type="common">Potato late blight agent</name>
    <dbReference type="NCBI Taxonomy" id="403677"/>
    <lineage>
        <taxon>Eukaryota</taxon>
        <taxon>Sar</taxon>
        <taxon>Stramenopiles</taxon>
        <taxon>Oomycota</taxon>
        <taxon>Peronosporales</taxon>
        <taxon>Peronosporaceae</taxon>
        <taxon>Phytophthora</taxon>
    </lineage>
</organism>
<reference key="1">
    <citation type="journal article" date="2009" name="Nature">
        <title>Genome sequence and analysis of the Irish potato famine pathogen Phytophthora infestans.</title>
        <authorList>
            <consortium name="The Broad Institute Genome Sequencing Platform"/>
            <person name="Haas B.J."/>
            <person name="Kamoun S."/>
            <person name="Zody M.C."/>
            <person name="Jiang R.H."/>
            <person name="Handsaker R.E."/>
            <person name="Cano L.M."/>
            <person name="Grabherr M."/>
            <person name="Kodira C.D."/>
            <person name="Raffaele S."/>
            <person name="Torto-Alalibo T."/>
            <person name="Bozkurt T.O."/>
            <person name="Ah-Fong A.M."/>
            <person name="Alvarado L."/>
            <person name="Anderson V.L."/>
            <person name="Armstrong M.R."/>
            <person name="Avrova A."/>
            <person name="Baxter L."/>
            <person name="Beynon J."/>
            <person name="Boevink P.C."/>
            <person name="Bollmann S.R."/>
            <person name="Bos J.I."/>
            <person name="Bulone V."/>
            <person name="Cai G."/>
            <person name="Cakir C."/>
            <person name="Carrington J.C."/>
            <person name="Chawner M."/>
            <person name="Conti L."/>
            <person name="Costanzo S."/>
            <person name="Ewan R."/>
            <person name="Fahlgren N."/>
            <person name="Fischbach M.A."/>
            <person name="Fugelstad J."/>
            <person name="Gilroy E.M."/>
            <person name="Gnerre S."/>
            <person name="Green P.J."/>
            <person name="Grenville-Briggs L.J."/>
            <person name="Griffith J."/>
            <person name="Grunwald N.J."/>
            <person name="Horn K."/>
            <person name="Horner N.R."/>
            <person name="Hu C.H."/>
            <person name="Huitema E."/>
            <person name="Jeong D.H."/>
            <person name="Jones A.M."/>
            <person name="Jones J.D."/>
            <person name="Jones R.W."/>
            <person name="Karlsson E.K."/>
            <person name="Kunjeti S.G."/>
            <person name="Lamour K."/>
            <person name="Liu Z."/>
            <person name="Ma L."/>
            <person name="Maclean D."/>
            <person name="Chibucos M.C."/>
            <person name="McDonald H."/>
            <person name="McWalters J."/>
            <person name="Meijer H.J."/>
            <person name="Morgan W."/>
            <person name="Morris P.F."/>
            <person name="Munro C.A."/>
            <person name="O'Neill K."/>
            <person name="Ospina-Giraldo M."/>
            <person name="Pinzon A."/>
            <person name="Pritchard L."/>
            <person name="Ramsahoye B."/>
            <person name="Ren Q."/>
            <person name="Restrepo S."/>
            <person name="Roy S."/>
            <person name="Sadanandom A."/>
            <person name="Savidor A."/>
            <person name="Schornack S."/>
            <person name="Schwartz D.C."/>
            <person name="Schumann U.D."/>
            <person name="Schwessinger B."/>
            <person name="Seyer L."/>
            <person name="Sharpe T."/>
            <person name="Silvar C."/>
            <person name="Song J."/>
            <person name="Studholme D.J."/>
            <person name="Sykes S."/>
            <person name="Thines M."/>
            <person name="van de Vondervoort P.J."/>
            <person name="Phuntumart V."/>
            <person name="Wawra S."/>
            <person name="Weide R."/>
            <person name="Win J."/>
            <person name="Young C."/>
            <person name="Zhou S."/>
            <person name="Fry W."/>
            <person name="Meyers B.C."/>
            <person name="van West P."/>
            <person name="Ristaino J."/>
            <person name="Govers F."/>
            <person name="Birch P.R."/>
            <person name="Whisson S.C."/>
            <person name="Judelson H.S."/>
            <person name="Nusbaum C."/>
        </authorList>
    </citation>
    <scope>NUCLEOTIDE SEQUENCE [LARGE SCALE GENOMIC DNA]</scope>
    <source>
        <strain>T30-4</strain>
    </source>
</reference>